<gene>
    <name evidence="1" type="primary">psbF</name>
</gene>
<comment type="function">
    <text evidence="1">This b-type cytochrome is tightly associated with the reaction center of photosystem II (PSII). PSII is a light-driven water:plastoquinone oxidoreductase that uses light energy to abstract electrons from H(2)O, generating O(2) and a proton gradient subsequently used for ATP formation. It consists of a core antenna complex that captures photons, and an electron transfer chain that converts photonic excitation into a charge separation.</text>
</comment>
<comment type="cofactor">
    <cofactor evidence="1">
        <name>heme b</name>
        <dbReference type="ChEBI" id="CHEBI:60344"/>
    </cofactor>
    <text evidence="1">With its partner (PsbE) binds heme. PSII binds additional chlorophylls, carotenoids and specific lipids.</text>
</comment>
<comment type="subunit">
    <text evidence="1">Heterodimer of an alpha subunit and a beta subunit. PSII is composed of 1 copy each of membrane proteins PsbA, PsbB, PsbC, PsbD, PsbE, PsbF, PsbH, PsbI, PsbJ, PsbK, PsbL, PsbM, PsbT, PsbX, PsbY, PsbZ, Psb30/Ycf12, at least 3 peripheral proteins of the oxygen-evolving complex and a large number of cofactors. It forms dimeric complexes.</text>
</comment>
<comment type="subcellular location">
    <subcellularLocation>
        <location evidence="1">Plastid</location>
        <location evidence="1">Chloroplast thylakoid membrane</location>
        <topology evidence="1">Single-pass membrane protein</topology>
    </subcellularLocation>
</comment>
<comment type="similarity">
    <text evidence="1">Belongs to the PsbE/PsbF family.</text>
</comment>
<feature type="chain" id="PRO_0000200374" description="Cytochrome b559 subunit beta">
    <location>
        <begin position="1"/>
        <end position="41"/>
    </location>
</feature>
<feature type="transmembrane region" description="Helical" evidence="1">
    <location>
        <begin position="16"/>
        <end position="32"/>
    </location>
</feature>
<feature type="binding site" description="axial binding residue" evidence="1">
    <location>
        <position position="20"/>
    </location>
    <ligand>
        <name>heme</name>
        <dbReference type="ChEBI" id="CHEBI:30413"/>
        <note>ligand shared with alpha subunit</note>
    </ligand>
    <ligandPart>
        <name>Fe</name>
        <dbReference type="ChEBI" id="CHEBI:18248"/>
    </ligandPart>
</feature>
<name>PSBF_CHLVU</name>
<keyword id="KW-0002">3D-structure</keyword>
<keyword id="KW-0150">Chloroplast</keyword>
<keyword id="KW-0249">Electron transport</keyword>
<keyword id="KW-0349">Heme</keyword>
<keyword id="KW-0408">Iron</keyword>
<keyword id="KW-0472">Membrane</keyword>
<keyword id="KW-0479">Metal-binding</keyword>
<keyword id="KW-0602">Photosynthesis</keyword>
<keyword id="KW-0604">Photosystem II</keyword>
<keyword id="KW-0934">Plastid</keyword>
<keyword id="KW-0793">Thylakoid</keyword>
<keyword id="KW-0812">Transmembrane</keyword>
<keyword id="KW-1133">Transmembrane helix</keyword>
<keyword id="KW-0813">Transport</keyword>
<accession>P56310</accession>
<sequence>MTARKSYTYPIFTVRWLAVHALAVPTVFFLGAITAMQFIQR</sequence>
<protein>
    <recommendedName>
        <fullName evidence="1">Cytochrome b559 subunit beta</fullName>
    </recommendedName>
    <alternativeName>
        <fullName evidence="1">PSII reaction center subunit VI</fullName>
    </alternativeName>
</protein>
<geneLocation type="chloroplast"/>
<organism>
    <name type="scientific">Chlorella vulgaris</name>
    <name type="common">Green alga</name>
    <dbReference type="NCBI Taxonomy" id="3077"/>
    <lineage>
        <taxon>Eukaryota</taxon>
        <taxon>Viridiplantae</taxon>
        <taxon>Chlorophyta</taxon>
        <taxon>core chlorophytes</taxon>
        <taxon>Trebouxiophyceae</taxon>
        <taxon>Chlorellales</taxon>
        <taxon>Chlorellaceae</taxon>
        <taxon>Chlorella clade</taxon>
        <taxon>Chlorella</taxon>
    </lineage>
</organism>
<dbReference type="EMBL" id="AB001684">
    <property type="protein sequence ID" value="BAA57902.1"/>
    <property type="molecule type" value="Genomic_DNA"/>
</dbReference>
<dbReference type="PIR" id="T07255">
    <property type="entry name" value="T07255"/>
</dbReference>
<dbReference type="RefSeq" id="NP_045827.1">
    <property type="nucleotide sequence ID" value="NC_001865.1"/>
</dbReference>
<dbReference type="PDB" id="8BD3">
    <property type="method" value="EM"/>
    <property type="resolution" value="2.73 A"/>
    <property type="chains" value="F/f=5-41"/>
</dbReference>
<dbReference type="PDBsum" id="8BD3"/>
<dbReference type="EMDB" id="EMD-15973"/>
<dbReference type="GeneID" id="809099"/>
<dbReference type="GO" id="GO:0009535">
    <property type="term" value="C:chloroplast thylakoid membrane"/>
    <property type="evidence" value="ECO:0007669"/>
    <property type="project" value="UniProtKB-SubCell"/>
</dbReference>
<dbReference type="GO" id="GO:0009539">
    <property type="term" value="C:photosystem II reaction center"/>
    <property type="evidence" value="ECO:0007669"/>
    <property type="project" value="InterPro"/>
</dbReference>
<dbReference type="GO" id="GO:0009055">
    <property type="term" value="F:electron transfer activity"/>
    <property type="evidence" value="ECO:0007669"/>
    <property type="project" value="UniProtKB-UniRule"/>
</dbReference>
<dbReference type="GO" id="GO:0020037">
    <property type="term" value="F:heme binding"/>
    <property type="evidence" value="ECO:0007669"/>
    <property type="project" value="InterPro"/>
</dbReference>
<dbReference type="GO" id="GO:0005506">
    <property type="term" value="F:iron ion binding"/>
    <property type="evidence" value="ECO:0007669"/>
    <property type="project" value="UniProtKB-UniRule"/>
</dbReference>
<dbReference type="GO" id="GO:0009767">
    <property type="term" value="P:photosynthetic electron transport chain"/>
    <property type="evidence" value="ECO:0007669"/>
    <property type="project" value="InterPro"/>
</dbReference>
<dbReference type="HAMAP" id="MF_00643">
    <property type="entry name" value="PSII_PsbF"/>
    <property type="match status" value="1"/>
</dbReference>
<dbReference type="InterPro" id="IPR006241">
    <property type="entry name" value="PSII_cyt_b559_bsu"/>
</dbReference>
<dbReference type="InterPro" id="IPR006216">
    <property type="entry name" value="PSII_cyt_b559_CS"/>
</dbReference>
<dbReference type="InterPro" id="IPR013081">
    <property type="entry name" value="PSII_cyt_b559_N"/>
</dbReference>
<dbReference type="NCBIfam" id="TIGR01333">
    <property type="entry name" value="cyt_b559_beta"/>
    <property type="match status" value="1"/>
</dbReference>
<dbReference type="Pfam" id="PF00283">
    <property type="entry name" value="Cytochrom_B559"/>
    <property type="match status" value="1"/>
</dbReference>
<dbReference type="PIRSF" id="PIRSF000037">
    <property type="entry name" value="PsbF"/>
    <property type="match status" value="1"/>
</dbReference>
<dbReference type="SUPFAM" id="SSF161045">
    <property type="entry name" value="Cytochrome b559 subunits"/>
    <property type="match status" value="1"/>
</dbReference>
<dbReference type="PROSITE" id="PS00537">
    <property type="entry name" value="CYTOCHROME_B559"/>
    <property type="match status" value="1"/>
</dbReference>
<reference key="1">
    <citation type="journal article" date="1997" name="Proc. Natl. Acad. Sci. U.S.A.">
        <title>Complete nucleotide sequence of the chloroplast genome from the green alga Chlorella vulgaris: the existence of genes possibly involved in chloroplast division.</title>
        <authorList>
            <person name="Wakasugi T."/>
            <person name="Nagai T."/>
            <person name="Kapoor M."/>
            <person name="Sugita M."/>
            <person name="Ito M."/>
            <person name="Ito S."/>
            <person name="Tsudzuki J."/>
            <person name="Nakashima K."/>
            <person name="Tsudzuki T."/>
            <person name="Suzuki Y."/>
            <person name="Hamada A."/>
            <person name="Ohta T."/>
            <person name="Inamura A."/>
            <person name="Yoshinaga K."/>
            <person name="Sugiura M."/>
        </authorList>
    </citation>
    <scope>NUCLEOTIDE SEQUENCE [LARGE SCALE GENOMIC DNA]</scope>
    <source>
        <strain>IAM C-27 / Tamiya</strain>
    </source>
</reference>
<evidence type="ECO:0000255" key="1">
    <source>
        <dbReference type="HAMAP-Rule" id="MF_00643"/>
    </source>
</evidence>
<proteinExistence type="evidence at protein level"/>